<feature type="chain" id="PRO_0000057509" description="tRNA pseudouridine synthase A">
    <location>
        <begin position="1"/>
        <end position="251"/>
    </location>
</feature>
<feature type="active site" description="Nucleophile" evidence="1">
    <location>
        <position position="56"/>
    </location>
</feature>
<feature type="binding site" evidence="1">
    <location>
        <position position="110"/>
    </location>
    <ligand>
        <name>substrate</name>
    </ligand>
</feature>
<comment type="function">
    <text evidence="1">Formation of pseudouridine at positions 38, 39 and 40 in the anticodon stem and loop of transfer RNAs.</text>
</comment>
<comment type="catalytic activity">
    <reaction evidence="1">
        <text>uridine(38/39/40) in tRNA = pseudouridine(38/39/40) in tRNA</text>
        <dbReference type="Rhea" id="RHEA:22376"/>
        <dbReference type="Rhea" id="RHEA-COMP:10085"/>
        <dbReference type="Rhea" id="RHEA-COMP:10087"/>
        <dbReference type="ChEBI" id="CHEBI:65314"/>
        <dbReference type="ChEBI" id="CHEBI:65315"/>
        <dbReference type="EC" id="5.4.99.12"/>
    </reaction>
</comment>
<comment type="similarity">
    <text evidence="1">Belongs to the tRNA pseudouridine synthase TruA family.</text>
</comment>
<organism>
    <name type="scientific">Picrophilus torridus (strain ATCC 700027 / DSM 9790 / JCM 10055 / NBRC 100828 / KAW 2/3)</name>
    <dbReference type="NCBI Taxonomy" id="1122961"/>
    <lineage>
        <taxon>Archaea</taxon>
        <taxon>Methanobacteriati</taxon>
        <taxon>Thermoplasmatota</taxon>
        <taxon>Thermoplasmata</taxon>
        <taxon>Thermoplasmatales</taxon>
        <taxon>Picrophilaceae</taxon>
        <taxon>Picrophilus</taxon>
    </lineage>
</organism>
<keyword id="KW-0413">Isomerase</keyword>
<keyword id="KW-0819">tRNA processing</keyword>
<proteinExistence type="inferred from homology"/>
<accession>Q6L0Y7</accession>
<dbReference type="EC" id="5.4.99.12" evidence="1"/>
<dbReference type="EMBL" id="AE017261">
    <property type="protein sequence ID" value="AAT43365.1"/>
    <property type="molecule type" value="Genomic_DNA"/>
</dbReference>
<dbReference type="SMR" id="Q6L0Y7"/>
<dbReference type="STRING" id="263820.PTO0780"/>
<dbReference type="PaxDb" id="263820-PTO0780"/>
<dbReference type="KEGG" id="pto:PTO0780"/>
<dbReference type="eggNOG" id="arCOG04449">
    <property type="taxonomic scope" value="Archaea"/>
</dbReference>
<dbReference type="HOGENOM" id="CLU_014673_4_2_2"/>
<dbReference type="InParanoid" id="Q6L0Y7"/>
<dbReference type="Proteomes" id="UP000000438">
    <property type="component" value="Chromosome"/>
</dbReference>
<dbReference type="GO" id="GO:0003723">
    <property type="term" value="F:RNA binding"/>
    <property type="evidence" value="ECO:0007669"/>
    <property type="project" value="InterPro"/>
</dbReference>
<dbReference type="GO" id="GO:0160147">
    <property type="term" value="F:tRNA pseudouridine(38-40) synthase activity"/>
    <property type="evidence" value="ECO:0007669"/>
    <property type="project" value="UniProtKB-EC"/>
</dbReference>
<dbReference type="GO" id="GO:0031119">
    <property type="term" value="P:tRNA pseudouridine synthesis"/>
    <property type="evidence" value="ECO:0007669"/>
    <property type="project" value="UniProtKB-UniRule"/>
</dbReference>
<dbReference type="Gene3D" id="3.30.70.660">
    <property type="entry name" value="Pseudouridine synthase I, catalytic domain, C-terminal subdomain"/>
    <property type="match status" value="1"/>
</dbReference>
<dbReference type="HAMAP" id="MF_00171">
    <property type="entry name" value="TruA"/>
    <property type="match status" value="1"/>
</dbReference>
<dbReference type="InterPro" id="IPR020103">
    <property type="entry name" value="PsdUridine_synth_cat_dom_sf"/>
</dbReference>
<dbReference type="InterPro" id="IPR001406">
    <property type="entry name" value="PsdUridine_synth_TruA"/>
</dbReference>
<dbReference type="InterPro" id="IPR020097">
    <property type="entry name" value="PsdUridine_synth_TruA_a/b_dom"/>
</dbReference>
<dbReference type="InterPro" id="IPR020095">
    <property type="entry name" value="PsdUridine_synth_TruA_C"/>
</dbReference>
<dbReference type="PANTHER" id="PTHR11142">
    <property type="entry name" value="PSEUDOURIDYLATE SYNTHASE"/>
    <property type="match status" value="1"/>
</dbReference>
<dbReference type="PANTHER" id="PTHR11142:SF0">
    <property type="entry name" value="TRNA PSEUDOURIDINE SYNTHASE-LIKE 1"/>
    <property type="match status" value="1"/>
</dbReference>
<dbReference type="Pfam" id="PF01416">
    <property type="entry name" value="PseudoU_synth_1"/>
    <property type="match status" value="1"/>
</dbReference>
<dbReference type="PIRSF" id="PIRSF001430">
    <property type="entry name" value="tRNA_psdUrid_synth"/>
    <property type="match status" value="1"/>
</dbReference>
<dbReference type="SUPFAM" id="SSF55120">
    <property type="entry name" value="Pseudouridine synthase"/>
    <property type="match status" value="1"/>
</dbReference>
<sequence length="251" mass="29923">MASQREMHLLIKYGYDGTKFEGFDRSNSKNSVESVIINVLSEYNITKNIESAARTDKNVSAAGNVFYIKTEERPEKILGILNGNIKNMFFHSYYLSNSYINPRYNSMKIYKYIIPYRIDSRLKNNIARFLGTHDFTNFSKNDYRNPVRTINKIEFEEYNDFTVVNFYGKSFVWHQLRSIIGFAMHSDEDPFSIKYHNRFLAEPEPLILYDIIYDNISFIKYRFNNRYIKNKYNSLFIESIIYRVFLRSIDV</sequence>
<protein>
    <recommendedName>
        <fullName evidence="1">tRNA pseudouridine synthase A</fullName>
        <ecNumber evidence="1">5.4.99.12</ecNumber>
    </recommendedName>
    <alternativeName>
        <fullName evidence="1">tRNA pseudouridine(38-40) synthase</fullName>
    </alternativeName>
    <alternativeName>
        <fullName evidence="1">tRNA pseudouridylate synthase I</fullName>
    </alternativeName>
    <alternativeName>
        <fullName evidence="1">tRNA-uridine isomerase I</fullName>
    </alternativeName>
</protein>
<reference key="1">
    <citation type="journal article" date="2004" name="Proc. Natl. Acad. Sci. U.S.A.">
        <title>Genome sequence of Picrophilus torridus and its implications for life around pH 0.</title>
        <authorList>
            <person name="Fuetterer O."/>
            <person name="Angelov A."/>
            <person name="Liesegang H."/>
            <person name="Gottschalk G."/>
            <person name="Schleper C."/>
            <person name="Schepers B."/>
            <person name="Dock C."/>
            <person name="Antranikian G."/>
            <person name="Liebl W."/>
        </authorList>
    </citation>
    <scope>NUCLEOTIDE SEQUENCE [LARGE SCALE GENOMIC DNA]</scope>
    <source>
        <strain>ATCC 700027 / DSM 9790 / JCM 10055 / NBRC 100828 / KAW 2/3</strain>
    </source>
</reference>
<evidence type="ECO:0000255" key="1">
    <source>
        <dbReference type="HAMAP-Rule" id="MF_00171"/>
    </source>
</evidence>
<gene>
    <name evidence="1" type="primary">truA</name>
    <name type="ordered locus">PTO0780</name>
</gene>
<name>TRUA_PICTO</name>